<reference key="1">
    <citation type="journal article" date="2003" name="Nature">
        <title>The genome sequence of the filamentous fungus Neurospora crassa.</title>
        <authorList>
            <person name="Galagan J.E."/>
            <person name="Calvo S.E."/>
            <person name="Borkovich K.A."/>
            <person name="Selker E.U."/>
            <person name="Read N.D."/>
            <person name="Jaffe D.B."/>
            <person name="FitzHugh W."/>
            <person name="Ma L.-J."/>
            <person name="Smirnov S."/>
            <person name="Purcell S."/>
            <person name="Rehman B."/>
            <person name="Elkins T."/>
            <person name="Engels R."/>
            <person name="Wang S."/>
            <person name="Nielsen C.B."/>
            <person name="Butler J."/>
            <person name="Endrizzi M."/>
            <person name="Qui D."/>
            <person name="Ianakiev P."/>
            <person name="Bell-Pedersen D."/>
            <person name="Nelson M.A."/>
            <person name="Werner-Washburne M."/>
            <person name="Selitrennikoff C.P."/>
            <person name="Kinsey J.A."/>
            <person name="Braun E.L."/>
            <person name="Zelter A."/>
            <person name="Schulte U."/>
            <person name="Kothe G.O."/>
            <person name="Jedd G."/>
            <person name="Mewes H.-W."/>
            <person name="Staben C."/>
            <person name="Marcotte E."/>
            <person name="Greenberg D."/>
            <person name="Roy A."/>
            <person name="Foley K."/>
            <person name="Naylor J."/>
            <person name="Stange-Thomann N."/>
            <person name="Barrett R."/>
            <person name="Gnerre S."/>
            <person name="Kamal M."/>
            <person name="Kamvysselis M."/>
            <person name="Mauceli E.W."/>
            <person name="Bielke C."/>
            <person name="Rudd S."/>
            <person name="Frishman D."/>
            <person name="Krystofova S."/>
            <person name="Rasmussen C."/>
            <person name="Metzenberg R.L."/>
            <person name="Perkins D.D."/>
            <person name="Kroken S."/>
            <person name="Cogoni C."/>
            <person name="Macino G."/>
            <person name="Catcheside D.E.A."/>
            <person name="Li W."/>
            <person name="Pratt R.J."/>
            <person name="Osmani S.A."/>
            <person name="DeSouza C.P.C."/>
            <person name="Glass N.L."/>
            <person name="Orbach M.J."/>
            <person name="Berglund J.A."/>
            <person name="Voelker R."/>
            <person name="Yarden O."/>
            <person name="Plamann M."/>
            <person name="Seiler S."/>
            <person name="Dunlap J.C."/>
            <person name="Radford A."/>
            <person name="Aramayo R."/>
            <person name="Natvig D.O."/>
            <person name="Alex L.A."/>
            <person name="Mannhaupt G."/>
            <person name="Ebbole D.J."/>
            <person name="Freitag M."/>
            <person name="Paulsen I."/>
            <person name="Sachs M.S."/>
            <person name="Lander E.S."/>
            <person name="Nusbaum C."/>
            <person name="Birren B.W."/>
        </authorList>
    </citation>
    <scope>NUCLEOTIDE SEQUENCE [LARGE SCALE GENOMIC DNA]</scope>
    <source>
        <strain>ATCC 24698 / 74-OR23-1A / CBS 708.71 / DSM 1257 / FGSC 987</strain>
    </source>
</reference>
<evidence type="ECO:0000250" key="1">
    <source>
        <dbReference type="UniProtKB" id="Q01926"/>
    </source>
</evidence>
<evidence type="ECO:0000255" key="2"/>
<evidence type="ECO:0000256" key="3">
    <source>
        <dbReference type="SAM" id="MobiDB-lite"/>
    </source>
</evidence>
<evidence type="ECO:0000305" key="4"/>
<organism>
    <name type="scientific">Neurospora crassa (strain ATCC 24698 / 74-OR23-1A / CBS 708.71 / DSM 1257 / FGSC 987)</name>
    <dbReference type="NCBI Taxonomy" id="367110"/>
    <lineage>
        <taxon>Eukaryota</taxon>
        <taxon>Fungi</taxon>
        <taxon>Dikarya</taxon>
        <taxon>Ascomycota</taxon>
        <taxon>Pezizomycotina</taxon>
        <taxon>Sordariomycetes</taxon>
        <taxon>Sordariomycetidae</taxon>
        <taxon>Sordariales</taxon>
        <taxon>Sordariaceae</taxon>
        <taxon>Neurospora</taxon>
    </lineage>
</organism>
<dbReference type="EMBL" id="CM002236">
    <property type="protein sequence ID" value="EAA35672.1"/>
    <property type="molecule type" value="Genomic_DNA"/>
</dbReference>
<dbReference type="RefSeq" id="XP_964908.1">
    <property type="nucleotide sequence ID" value="XM_959815.2"/>
</dbReference>
<dbReference type="SMR" id="Q7SFQ9"/>
<dbReference type="FunCoup" id="Q7SFQ9">
    <property type="interactions" value="313"/>
</dbReference>
<dbReference type="STRING" id="367110.Q7SFQ9"/>
<dbReference type="PaxDb" id="5141-EFNCRP00000008702"/>
<dbReference type="EnsemblFungi" id="EAA35672">
    <property type="protein sequence ID" value="EAA35672"/>
    <property type="gene ID" value="NCU09091"/>
</dbReference>
<dbReference type="GeneID" id="3881059"/>
<dbReference type="KEGG" id="ncr:NCU09091"/>
<dbReference type="VEuPathDB" id="FungiDB:NCU09091"/>
<dbReference type="HOGENOM" id="CLU_025144_2_0_1"/>
<dbReference type="InParanoid" id="Q7SFQ9"/>
<dbReference type="OMA" id="EKTHDLY"/>
<dbReference type="OrthoDB" id="10251508at2759"/>
<dbReference type="Proteomes" id="UP000001805">
    <property type="component" value="Chromosome 1, Linkage Group I"/>
</dbReference>
<dbReference type="GO" id="GO:0005743">
    <property type="term" value="C:mitochondrial inner membrane"/>
    <property type="evidence" value="ECO:0000250"/>
    <property type="project" value="UniProtKB"/>
</dbReference>
<dbReference type="GO" id="GO:0015095">
    <property type="term" value="F:magnesium ion transmembrane transporter activity"/>
    <property type="evidence" value="ECO:0000250"/>
    <property type="project" value="UniProtKB"/>
</dbReference>
<dbReference type="GO" id="GO:0045016">
    <property type="term" value="P:mitochondrial magnesium ion transmembrane transport"/>
    <property type="evidence" value="ECO:0000250"/>
    <property type="project" value="UniProtKB"/>
</dbReference>
<dbReference type="CDD" id="cd12823">
    <property type="entry name" value="Mrs2_Mfm1p-like"/>
    <property type="match status" value="1"/>
</dbReference>
<dbReference type="FunFam" id="1.20.58.340:FF:000005">
    <property type="entry name" value="Inner membrane magnesium transporter MRS2"/>
    <property type="match status" value="1"/>
</dbReference>
<dbReference type="FunFam" id="2.40.128.330:FF:000002">
    <property type="entry name" value="Inner membrane magnesium transporter mrs2"/>
    <property type="match status" value="1"/>
</dbReference>
<dbReference type="Gene3D" id="2.40.128.330">
    <property type="match status" value="1"/>
</dbReference>
<dbReference type="Gene3D" id="1.20.58.340">
    <property type="entry name" value="Magnesium transport protein CorA, transmembrane region"/>
    <property type="match status" value="1"/>
</dbReference>
<dbReference type="InterPro" id="IPR039204">
    <property type="entry name" value="MRS2-like"/>
</dbReference>
<dbReference type="PANTHER" id="PTHR13890:SF0">
    <property type="entry name" value="MAGNESIUM TRANSPORTER MRS2 HOMOLOG, MITOCHONDRIAL"/>
    <property type="match status" value="1"/>
</dbReference>
<dbReference type="PANTHER" id="PTHR13890">
    <property type="entry name" value="RNA SPLICING PROTEIN MRS2, MITOCHONDRIAL"/>
    <property type="match status" value="1"/>
</dbReference>
<dbReference type="Pfam" id="PF22099">
    <property type="entry name" value="MRS2-like"/>
    <property type="match status" value="1"/>
</dbReference>
<feature type="transit peptide" description="Mitochondrion" evidence="2">
    <location>
        <begin position="1"/>
        <end position="75"/>
    </location>
</feature>
<feature type="chain" id="PRO_0000043247" description="Mitochondrial inner membrane magnesium transporter mrs2">
    <location>
        <begin position="76"/>
        <end position="547"/>
    </location>
</feature>
<feature type="transmembrane region" description="Helical" evidence="2">
    <location>
        <begin position="428"/>
        <end position="448"/>
    </location>
</feature>
<feature type="transmembrane region" description="Helical" evidence="2">
    <location>
        <begin position="467"/>
        <end position="487"/>
    </location>
</feature>
<feature type="region of interest" description="Disordered" evidence="3">
    <location>
        <begin position="46"/>
        <end position="76"/>
    </location>
</feature>
<feature type="region of interest" description="Disordered" evidence="3">
    <location>
        <begin position="105"/>
        <end position="125"/>
    </location>
</feature>
<feature type="short sequence motif" description="YGMN">
    <location>
        <begin position="452"/>
        <end position="455"/>
    </location>
</feature>
<feature type="compositionally biased region" description="Low complexity" evidence="3">
    <location>
        <begin position="52"/>
        <end position="74"/>
    </location>
</feature>
<sequence>MPPALRPAAPSRSLLRYLRAQSEGLSFAPTCRAAAERHPALQCRHGCTAGGSTRPPRQPSSSTTTRSLSTATPPKRTQLRAGLVDLEAILPKSLRKQRTTKSLLALPPPAGSLRFSSNQSSDCDSKRPKLREWLFGNGEKKGPPDTRLNDDDIRVALEEESGSIFQRRALTAKAAMDPRLRCTEVDENGNVVMVDGELKKSELIAKYGLLPRDLRKIDSSNLPHILIRPSAILLNLLHLKVLIKHDCVLLFDVYGSKSSYPQSAFMYDLQGKLQQKQSSGANSLPYEFRALEAVLMSVTSELEADFEAVRDPVIRILSELEDDIDREKLRVLLVLSKRVSTFEQKAKLVRDAIEELLEADDDLASMYLTEKTHDLYRGEDDHTEIELLLESYNKICDEVVEEASNLVSSIRNTEEIIRAILDANRNSLMLLDLKFSVGTLGLAMGTFLASWYGMNLENFIEETNWGFAMVTSVSTVASLIVCWYGLVKLRKVQRVKMGDLHNRNAPNHWFRDESTDVLLDPSNRERLRRINSMKSAQQKRSTSKKWF</sequence>
<protein>
    <recommendedName>
        <fullName>Mitochondrial inner membrane magnesium transporter mrs2</fullName>
    </recommendedName>
    <alternativeName>
        <fullName>RNA-splicing protein MRS2</fullName>
    </alternativeName>
</protein>
<proteinExistence type="inferred from homology"/>
<name>MRS2_NEUCR</name>
<accession>Q7SFQ9</accession>
<keyword id="KW-0406">Ion transport</keyword>
<keyword id="KW-0460">Magnesium</keyword>
<keyword id="KW-0472">Membrane</keyword>
<keyword id="KW-0496">Mitochondrion</keyword>
<keyword id="KW-0999">Mitochondrion inner membrane</keyword>
<keyword id="KW-1185">Reference proteome</keyword>
<keyword id="KW-0809">Transit peptide</keyword>
<keyword id="KW-0812">Transmembrane</keyword>
<keyword id="KW-1133">Transmembrane helix</keyword>
<keyword id="KW-0813">Transport</keyword>
<gene>
    <name type="primary">mrs2</name>
    <name type="ORF">NCU09091</name>
</gene>
<comment type="function">
    <text evidence="1">High-conductance magnesium-selective channel that mediates the influx of magnesium into the mitochondrial matrix. Essential for the splicing of mRNA group II introns in mitochondria by affecting mitochondrial magnesium concentrations, which are critical for group II intron splicing. It also suppresses a variety of mitochondrial intron mutations and its absence may disturb the assembly of mitochondrial membrane complexes.</text>
</comment>
<comment type="subunit">
    <text evidence="1">Homopentamer. Forms homooligomers. Interacts with MFM1.</text>
</comment>
<comment type="subcellular location">
    <subcellularLocation>
        <location evidence="1">Mitochondrion inner membrane</location>
        <topology evidence="1">Multi-pass membrane protein</topology>
    </subcellularLocation>
</comment>
<comment type="similarity">
    <text evidence="4">Belongs to the CorA metal ion transporter (MIT) (TC 1.A.35) family.</text>
</comment>